<keyword id="KW-0008">Acetylcholine receptor inhibiting toxin</keyword>
<keyword id="KW-1015">Disulfide bond</keyword>
<keyword id="KW-0872">Ion channel impairing toxin</keyword>
<keyword id="KW-0528">Neurotoxin</keyword>
<keyword id="KW-0629">Postsynaptic neurotoxin</keyword>
<keyword id="KW-0964">Secreted</keyword>
<keyword id="KW-0732">Signal</keyword>
<keyword id="KW-0800">Toxin</keyword>
<evidence type="ECO:0000250" key="1"/>
<evidence type="ECO:0000250" key="2">
    <source>
        <dbReference type="UniProtKB" id="P60615"/>
    </source>
</evidence>
<evidence type="ECO:0000269" key="3">
    <source>
    </source>
</evidence>
<evidence type="ECO:0000305" key="4"/>
<comment type="function">
    <text evidence="2">Binds with high affinity to muscular (alpha-1/CHRNA1) and neuronal (alpha-7/CHRNA7) nicotinic acetylcholine receptor (nAChR) and inhibits acetylcholine from binding to the receptor, thereby impairing neuromuscular and neuronal transmission.</text>
</comment>
<comment type="subcellular location">
    <subcellularLocation>
        <location evidence="3">Secreted</location>
    </subcellularLocation>
</comment>
<comment type="tissue specificity">
    <text evidence="4">Expressed by the venom gland.</text>
</comment>
<comment type="similarity">
    <text evidence="4">Belongs to the three-finger toxin family. Long-chain subfamily. Type II alpha-neurotoxin sub-subfamily.</text>
</comment>
<accession>F8J2E6</accession>
<name>3L231_DRYCN</name>
<feature type="signal peptide" evidence="1">
    <location>
        <begin position="1"/>
        <end position="21"/>
    </location>
</feature>
<feature type="chain" id="PRO_0000425522" description="Long neurotoxin 31">
    <location>
        <begin position="22"/>
        <end position="88"/>
    </location>
</feature>
<feature type="disulfide bond" evidence="1">
    <location>
        <begin position="24"/>
        <end position="42"/>
    </location>
</feature>
<feature type="disulfide bond" evidence="1">
    <location>
        <begin position="35"/>
        <end position="63"/>
    </location>
</feature>
<feature type="disulfide bond" evidence="1">
    <location>
        <begin position="48"/>
        <end position="52"/>
    </location>
</feature>
<feature type="disulfide bond" evidence="1">
    <location>
        <begin position="67"/>
        <end position="78"/>
    </location>
</feature>
<feature type="disulfide bond" evidence="1">
    <location>
        <begin position="79"/>
        <end position="84"/>
    </location>
</feature>
<proteinExistence type="evidence at protein level"/>
<dbReference type="EMBL" id="FJ752464">
    <property type="protein sequence ID" value="ACR78486.1"/>
    <property type="molecule type" value="mRNA"/>
</dbReference>
<dbReference type="SMR" id="F8J2E6"/>
<dbReference type="GO" id="GO:0005576">
    <property type="term" value="C:extracellular region"/>
    <property type="evidence" value="ECO:0007669"/>
    <property type="project" value="UniProtKB-SubCell"/>
</dbReference>
<dbReference type="GO" id="GO:0030550">
    <property type="term" value="F:acetylcholine receptor inhibitor activity"/>
    <property type="evidence" value="ECO:0007669"/>
    <property type="project" value="UniProtKB-KW"/>
</dbReference>
<dbReference type="GO" id="GO:0099106">
    <property type="term" value="F:ion channel regulator activity"/>
    <property type="evidence" value="ECO:0007669"/>
    <property type="project" value="UniProtKB-KW"/>
</dbReference>
<dbReference type="GO" id="GO:0090729">
    <property type="term" value="F:toxin activity"/>
    <property type="evidence" value="ECO:0007669"/>
    <property type="project" value="UniProtKB-KW"/>
</dbReference>
<dbReference type="CDD" id="cd00206">
    <property type="entry name" value="TFP_snake_toxin"/>
    <property type="match status" value="1"/>
</dbReference>
<dbReference type="Gene3D" id="2.10.60.10">
    <property type="entry name" value="CD59"/>
    <property type="match status" value="1"/>
</dbReference>
<dbReference type="InterPro" id="IPR003571">
    <property type="entry name" value="Snake_3FTx"/>
</dbReference>
<dbReference type="InterPro" id="IPR045860">
    <property type="entry name" value="Snake_toxin-like_sf"/>
</dbReference>
<dbReference type="InterPro" id="IPR018354">
    <property type="entry name" value="Snake_toxin_con_site"/>
</dbReference>
<dbReference type="InterPro" id="IPR054131">
    <property type="entry name" value="Toxin_cobra-type"/>
</dbReference>
<dbReference type="Pfam" id="PF21947">
    <property type="entry name" value="Toxin_cobra-type"/>
    <property type="match status" value="1"/>
</dbReference>
<dbReference type="SUPFAM" id="SSF57302">
    <property type="entry name" value="Snake toxin-like"/>
    <property type="match status" value="1"/>
</dbReference>
<dbReference type="PROSITE" id="PS00272">
    <property type="entry name" value="SNAKE_TOXIN"/>
    <property type="match status" value="1"/>
</dbReference>
<sequence>MKTLLLTLVVVTIVCLDLGNSFSCYKTPYVKSEPCAPGENLCYTKSWCDAFCSIRGKVIELGCAATCPPAEPKKDITCCSTDNCNTHP</sequence>
<organism>
    <name type="scientific">Drysdalia coronoides</name>
    <name type="common">White-lipped snake</name>
    <name type="synonym">Hoplocephalus coronoides</name>
    <dbReference type="NCBI Taxonomy" id="66186"/>
    <lineage>
        <taxon>Eukaryota</taxon>
        <taxon>Metazoa</taxon>
        <taxon>Chordata</taxon>
        <taxon>Craniata</taxon>
        <taxon>Vertebrata</taxon>
        <taxon>Euteleostomi</taxon>
        <taxon>Lepidosauria</taxon>
        <taxon>Squamata</taxon>
        <taxon>Bifurcata</taxon>
        <taxon>Unidentata</taxon>
        <taxon>Episquamata</taxon>
        <taxon>Toxicofera</taxon>
        <taxon>Serpentes</taxon>
        <taxon>Colubroidea</taxon>
        <taxon>Elapidae</taxon>
        <taxon>Notechinae</taxon>
        <taxon>Drysdalia</taxon>
    </lineage>
</organism>
<protein>
    <recommendedName>
        <fullName>Long neurotoxin 31</fullName>
        <shortName>LNTX-31</shortName>
    </recommendedName>
</protein>
<reference key="1">
    <citation type="journal article" date="2011" name="J. Proteome Res.">
        <title>Identification of novel proteins from the venom of a cryptic snake Drysdalia coronoides by a combined transcriptomics and proteomics approach.</title>
        <authorList>
            <person name="Chatrath S.T."/>
            <person name="Chapeaurouge A."/>
            <person name="Lin Q."/>
            <person name="Lim T.K."/>
            <person name="Dunstan N."/>
            <person name="Mirtschin P."/>
            <person name="Kumar P.P."/>
            <person name="Kini R.M."/>
        </authorList>
    </citation>
    <scope>NUCLEOTIDE SEQUENCE [MRNA]</scope>
    <scope>IDENTIFICATION BY MASS SPECTROMETRY</scope>
    <scope>SUBCELLULAR LOCATION</scope>
    <source>
        <tissue>Venom</tissue>
        <tissue>Venom gland</tissue>
    </source>
</reference>